<protein>
    <recommendedName>
        <fullName evidence="5">Mitochondrial E3 ubiquitin protein ligase 1</fullName>
        <ecNumber evidence="4">2.3.2.27</ecNumber>
    </recommendedName>
    <alternativeName>
        <fullName evidence="6">Mitochondrial E3 ubiquitin protein transferase 1</fullName>
    </alternativeName>
</protein>
<comment type="function">
    <text evidence="4">Exhibits weak E3 ubiquitin-protein ligase activity. E3 ubiquitin ligases accept ubiquitin from an E2 ubiquitin-conjugating enzyme in the form of a thioester and then directly transfer the ubiquitin to targeted substrates. Plays a role in the control of mitochondrial morphology by promoting mitochondrial fission. Negatively regulates the mitochondrial fusion protein marf by promoting its ubiquitination, acting in a pathway that is parallel to the park/pink1 regulatory pathway.</text>
</comment>
<comment type="catalytic activity">
    <reaction evidence="4">
        <text>S-ubiquitinyl-[E2 ubiquitin-conjugating enzyme]-L-cysteine + [acceptor protein]-L-lysine = [E2 ubiquitin-conjugating enzyme]-L-cysteine + N(6)-ubiquitinyl-[acceptor protein]-L-lysine.</text>
        <dbReference type="EC" id="2.3.2.27"/>
    </reaction>
</comment>
<comment type="subunit">
    <text evidence="4">Interacts with Marf.</text>
</comment>
<comment type="interaction">
    <interactant intactId="EBI-156824">
        <id>Q9VZJ9</id>
    </interactant>
    <interactant intactId="EBI-2549759">
        <id>Q9VYX1</id>
        <label>e(y)2</label>
    </interactant>
    <organismsDiffer>false</organismsDiffer>
    <experiments>4</experiments>
</comment>
<comment type="interaction">
    <interactant intactId="EBI-156824">
        <id>Q9VZJ9</id>
    </interactant>
    <interactant intactId="EBI-83262">
        <id>Q7YU24</id>
        <label>Marf</label>
    </interactant>
    <organismsDiffer>false</organismsDiffer>
    <experiments>2</experiments>
</comment>
<comment type="subcellular location">
    <subcellularLocation>
        <location evidence="1">Mitochondrion outer membrane</location>
        <topology evidence="2">Multi-pass membrane protein</topology>
    </subcellularLocation>
</comment>
<comment type="PTM">
    <text evidence="4">Auto-ubiquitinated.</text>
</comment>
<comment type="disruption phenotype">
    <text evidence="4">No gross morphological defects. Mitochondria are slightly elongated.</text>
</comment>
<sequence>MEFLHESVALGVDLLILGLCAREYVHYKRTAKVLKAAPQYNIDGDLKSVVERQRDKKIPYAVIRGTVTPIGVPLRSSLVPSVSGVLQIVKLHEHRVTRGFAGFWTEQHKLLHESANEMPFELRNQSHGVEIVDALSAAVLDVDVVYDNYEPSNLSLFDHVFGFFSGVRQRGLQTTEEVLREGSFLTAIGELELDGDTLRMQPSNEGPLFLTTATKSTLIKRFEDAKTTTILKLVVCSTISAILVAFIAKKLYRKRKQEREEAKIRERLDTERRERRARSRPHTLSQDQLCVVCSTNPKEIILLPCGHVCLCEDCAQKISVTCPVCRGSIVSKAAAFIA</sequence>
<gene>
    <name evidence="5 8" type="primary">Mul1</name>
    <name evidence="8" type="ORF">CG1134</name>
</gene>
<name>MUL1_DROME</name>
<proteinExistence type="evidence at protein level"/>
<organism evidence="9">
    <name type="scientific">Drosophila melanogaster</name>
    <name type="common">Fruit fly</name>
    <dbReference type="NCBI Taxonomy" id="7227"/>
    <lineage>
        <taxon>Eukaryota</taxon>
        <taxon>Metazoa</taxon>
        <taxon>Ecdysozoa</taxon>
        <taxon>Arthropoda</taxon>
        <taxon>Hexapoda</taxon>
        <taxon>Insecta</taxon>
        <taxon>Pterygota</taxon>
        <taxon>Neoptera</taxon>
        <taxon>Endopterygota</taxon>
        <taxon>Diptera</taxon>
        <taxon>Brachycera</taxon>
        <taxon>Muscomorpha</taxon>
        <taxon>Ephydroidea</taxon>
        <taxon>Drosophilidae</taxon>
        <taxon>Drosophila</taxon>
        <taxon>Sophophora</taxon>
    </lineage>
</organism>
<feature type="chain" id="PRO_0000442139" description="Mitochondrial E3 ubiquitin protein ligase 1">
    <location>
        <begin position="1"/>
        <end position="338"/>
    </location>
</feature>
<feature type="topological domain" description="Cytoplasmic" evidence="1">
    <location>
        <begin position="1"/>
        <end position="3"/>
    </location>
</feature>
<feature type="transmembrane region" description="Helical" evidence="2">
    <location>
        <begin position="4"/>
        <end position="24"/>
    </location>
</feature>
<feature type="topological domain" description="Mitochondrial intermembrane" evidence="1">
    <location>
        <begin position="25"/>
        <end position="227"/>
    </location>
</feature>
<feature type="transmembrane region" description="Helical" evidence="2">
    <location>
        <begin position="228"/>
        <end position="248"/>
    </location>
</feature>
<feature type="topological domain" description="Cytoplasmic" evidence="1">
    <location>
        <begin position="249"/>
        <end position="338"/>
    </location>
</feature>
<feature type="zinc finger region" description="RING-type" evidence="3">
    <location>
        <begin position="290"/>
        <end position="326"/>
    </location>
</feature>
<feature type="mutagenesis site" description="Abolishes ligase activity." evidence="4">
    <original>H</original>
    <variation>A</variation>
    <location>
        <position position="307"/>
    </location>
</feature>
<evidence type="ECO:0000250" key="1">
    <source>
        <dbReference type="UniProtKB" id="Q969V5"/>
    </source>
</evidence>
<evidence type="ECO:0000255" key="2"/>
<evidence type="ECO:0000255" key="3">
    <source>
        <dbReference type="PROSITE-ProRule" id="PRU00175"/>
    </source>
</evidence>
<evidence type="ECO:0000269" key="4">
    <source>
    </source>
</evidence>
<evidence type="ECO:0000303" key="5">
    <source>
    </source>
</evidence>
<evidence type="ECO:0000305" key="6"/>
<evidence type="ECO:0000312" key="7">
    <source>
        <dbReference type="EMBL" id="AAM29268.1"/>
    </source>
</evidence>
<evidence type="ECO:0000312" key="8">
    <source>
        <dbReference type="FlyBase" id="FBgn0035483"/>
    </source>
</evidence>
<evidence type="ECO:0000312" key="9">
    <source>
        <dbReference type="Proteomes" id="UP000000803"/>
    </source>
</evidence>
<keyword id="KW-1017">Isopeptide bond</keyword>
<keyword id="KW-0472">Membrane</keyword>
<keyword id="KW-0479">Metal-binding</keyword>
<keyword id="KW-0496">Mitochondrion</keyword>
<keyword id="KW-1000">Mitochondrion outer membrane</keyword>
<keyword id="KW-1185">Reference proteome</keyword>
<keyword id="KW-0808">Transferase</keyword>
<keyword id="KW-0812">Transmembrane</keyword>
<keyword id="KW-1133">Transmembrane helix</keyword>
<keyword id="KW-0832">Ubl conjugation</keyword>
<keyword id="KW-0833">Ubl conjugation pathway</keyword>
<keyword id="KW-0862">Zinc</keyword>
<keyword id="KW-0863">Zinc-finger</keyword>
<reference evidence="9" key="1">
    <citation type="journal article" date="2000" name="Science">
        <title>The genome sequence of Drosophila melanogaster.</title>
        <authorList>
            <person name="Adams M.D."/>
            <person name="Celniker S.E."/>
            <person name="Holt R.A."/>
            <person name="Evans C.A."/>
            <person name="Gocayne J.D."/>
            <person name="Amanatides P.G."/>
            <person name="Scherer S.E."/>
            <person name="Li P.W."/>
            <person name="Hoskins R.A."/>
            <person name="Galle R.F."/>
            <person name="George R.A."/>
            <person name="Lewis S.E."/>
            <person name="Richards S."/>
            <person name="Ashburner M."/>
            <person name="Henderson S.N."/>
            <person name="Sutton G.G."/>
            <person name="Wortman J.R."/>
            <person name="Yandell M.D."/>
            <person name="Zhang Q."/>
            <person name="Chen L.X."/>
            <person name="Brandon R.C."/>
            <person name="Rogers Y.-H.C."/>
            <person name="Blazej R.G."/>
            <person name="Champe M."/>
            <person name="Pfeiffer B.D."/>
            <person name="Wan K.H."/>
            <person name="Doyle C."/>
            <person name="Baxter E.G."/>
            <person name="Helt G."/>
            <person name="Nelson C.R."/>
            <person name="Miklos G.L.G."/>
            <person name="Abril J.F."/>
            <person name="Agbayani A."/>
            <person name="An H.-J."/>
            <person name="Andrews-Pfannkoch C."/>
            <person name="Baldwin D."/>
            <person name="Ballew R.M."/>
            <person name="Basu A."/>
            <person name="Baxendale J."/>
            <person name="Bayraktaroglu L."/>
            <person name="Beasley E.M."/>
            <person name="Beeson K.Y."/>
            <person name="Benos P.V."/>
            <person name="Berman B.P."/>
            <person name="Bhandari D."/>
            <person name="Bolshakov S."/>
            <person name="Borkova D."/>
            <person name="Botchan M.R."/>
            <person name="Bouck J."/>
            <person name="Brokstein P."/>
            <person name="Brottier P."/>
            <person name="Burtis K.C."/>
            <person name="Busam D.A."/>
            <person name="Butler H."/>
            <person name="Cadieu E."/>
            <person name="Center A."/>
            <person name="Chandra I."/>
            <person name="Cherry J.M."/>
            <person name="Cawley S."/>
            <person name="Dahlke C."/>
            <person name="Davenport L.B."/>
            <person name="Davies P."/>
            <person name="de Pablos B."/>
            <person name="Delcher A."/>
            <person name="Deng Z."/>
            <person name="Mays A.D."/>
            <person name="Dew I."/>
            <person name="Dietz S.M."/>
            <person name="Dodson K."/>
            <person name="Doup L.E."/>
            <person name="Downes M."/>
            <person name="Dugan-Rocha S."/>
            <person name="Dunkov B.C."/>
            <person name="Dunn P."/>
            <person name="Durbin K.J."/>
            <person name="Evangelista C.C."/>
            <person name="Ferraz C."/>
            <person name="Ferriera S."/>
            <person name="Fleischmann W."/>
            <person name="Fosler C."/>
            <person name="Gabrielian A.E."/>
            <person name="Garg N.S."/>
            <person name="Gelbart W.M."/>
            <person name="Glasser K."/>
            <person name="Glodek A."/>
            <person name="Gong F."/>
            <person name="Gorrell J.H."/>
            <person name="Gu Z."/>
            <person name="Guan P."/>
            <person name="Harris M."/>
            <person name="Harris N.L."/>
            <person name="Harvey D.A."/>
            <person name="Heiman T.J."/>
            <person name="Hernandez J.R."/>
            <person name="Houck J."/>
            <person name="Hostin D."/>
            <person name="Houston K.A."/>
            <person name="Howland T.J."/>
            <person name="Wei M.-H."/>
            <person name="Ibegwam C."/>
            <person name="Jalali M."/>
            <person name="Kalush F."/>
            <person name="Karpen G.H."/>
            <person name="Ke Z."/>
            <person name="Kennison J.A."/>
            <person name="Ketchum K.A."/>
            <person name="Kimmel B.E."/>
            <person name="Kodira C.D."/>
            <person name="Kraft C.L."/>
            <person name="Kravitz S."/>
            <person name="Kulp D."/>
            <person name="Lai Z."/>
            <person name="Lasko P."/>
            <person name="Lei Y."/>
            <person name="Levitsky A.A."/>
            <person name="Li J.H."/>
            <person name="Li Z."/>
            <person name="Liang Y."/>
            <person name="Lin X."/>
            <person name="Liu X."/>
            <person name="Mattei B."/>
            <person name="McIntosh T.C."/>
            <person name="McLeod M.P."/>
            <person name="McPherson D."/>
            <person name="Merkulov G."/>
            <person name="Milshina N.V."/>
            <person name="Mobarry C."/>
            <person name="Morris J."/>
            <person name="Moshrefi A."/>
            <person name="Mount S.M."/>
            <person name="Moy M."/>
            <person name="Murphy B."/>
            <person name="Murphy L."/>
            <person name="Muzny D.M."/>
            <person name="Nelson D.L."/>
            <person name="Nelson D.R."/>
            <person name="Nelson K.A."/>
            <person name="Nixon K."/>
            <person name="Nusskern D.R."/>
            <person name="Pacleb J.M."/>
            <person name="Palazzolo M."/>
            <person name="Pittman G.S."/>
            <person name="Pan S."/>
            <person name="Pollard J."/>
            <person name="Puri V."/>
            <person name="Reese M.G."/>
            <person name="Reinert K."/>
            <person name="Remington K."/>
            <person name="Saunders R.D.C."/>
            <person name="Scheeler F."/>
            <person name="Shen H."/>
            <person name="Shue B.C."/>
            <person name="Siden-Kiamos I."/>
            <person name="Simpson M."/>
            <person name="Skupski M.P."/>
            <person name="Smith T.J."/>
            <person name="Spier E."/>
            <person name="Spradling A.C."/>
            <person name="Stapleton M."/>
            <person name="Strong R."/>
            <person name="Sun E."/>
            <person name="Svirskas R."/>
            <person name="Tector C."/>
            <person name="Turner R."/>
            <person name="Venter E."/>
            <person name="Wang A.H."/>
            <person name="Wang X."/>
            <person name="Wang Z.-Y."/>
            <person name="Wassarman D.A."/>
            <person name="Weinstock G.M."/>
            <person name="Weissenbach J."/>
            <person name="Williams S.M."/>
            <person name="Woodage T."/>
            <person name="Worley K.C."/>
            <person name="Wu D."/>
            <person name="Yang S."/>
            <person name="Yao Q.A."/>
            <person name="Ye J."/>
            <person name="Yeh R.-F."/>
            <person name="Zaveri J.S."/>
            <person name="Zhan M."/>
            <person name="Zhang G."/>
            <person name="Zhao Q."/>
            <person name="Zheng L."/>
            <person name="Zheng X.H."/>
            <person name="Zhong F.N."/>
            <person name="Zhong W."/>
            <person name="Zhou X."/>
            <person name="Zhu S.C."/>
            <person name="Zhu X."/>
            <person name="Smith H.O."/>
            <person name="Gibbs R.A."/>
            <person name="Myers E.W."/>
            <person name="Rubin G.M."/>
            <person name="Venter J.C."/>
        </authorList>
    </citation>
    <scope>NUCLEOTIDE SEQUENCE [LARGE SCALE GENOMIC DNA]</scope>
    <source>
        <strain>Berkeley</strain>
    </source>
</reference>
<reference evidence="9" key="2">
    <citation type="journal article" date="2002" name="Genome Biol.">
        <title>Annotation of the Drosophila melanogaster euchromatic genome: a systematic review.</title>
        <authorList>
            <person name="Misra S."/>
            <person name="Crosby M.A."/>
            <person name="Mungall C.J."/>
            <person name="Matthews B.B."/>
            <person name="Campbell K.S."/>
            <person name="Hradecky P."/>
            <person name="Huang Y."/>
            <person name="Kaminker J.S."/>
            <person name="Millburn G.H."/>
            <person name="Prochnik S.E."/>
            <person name="Smith C.D."/>
            <person name="Tupy J.L."/>
            <person name="Whitfield E.J."/>
            <person name="Bayraktaroglu L."/>
            <person name="Berman B.P."/>
            <person name="Bettencourt B.R."/>
            <person name="Celniker S.E."/>
            <person name="de Grey A.D.N.J."/>
            <person name="Drysdale R.A."/>
            <person name="Harris N.L."/>
            <person name="Richter J."/>
            <person name="Russo S."/>
            <person name="Schroeder A.J."/>
            <person name="Shu S.Q."/>
            <person name="Stapleton M."/>
            <person name="Yamada C."/>
            <person name="Ashburner M."/>
            <person name="Gelbart W.M."/>
            <person name="Rubin G.M."/>
            <person name="Lewis S.E."/>
        </authorList>
    </citation>
    <scope>GENOME REANNOTATION</scope>
    <source>
        <strain>Berkeley</strain>
    </source>
</reference>
<reference evidence="7" key="3">
    <citation type="journal article" date="2002" name="Genome Biol.">
        <title>A Drosophila full-length cDNA resource.</title>
        <authorList>
            <person name="Stapleton M."/>
            <person name="Carlson J.W."/>
            <person name="Brokstein P."/>
            <person name="Yu C."/>
            <person name="Champe M."/>
            <person name="George R.A."/>
            <person name="Guarin H."/>
            <person name="Kronmiller B."/>
            <person name="Pacleb J.M."/>
            <person name="Park S."/>
            <person name="Wan K.H."/>
            <person name="Rubin G.M."/>
            <person name="Celniker S.E."/>
        </authorList>
    </citation>
    <scope>NUCLEOTIDE SEQUENCE [LARGE SCALE MRNA]</scope>
    <source>
        <strain>Berkeley</strain>
        <tissue>Testis</tissue>
    </source>
</reference>
<reference evidence="6" key="4">
    <citation type="journal article" date="2014" name="Elife">
        <title>MUL1 acts in parallel to the PINK1/parkin pathway in regulating mitofusin and compensates for loss of PINK1/parkin.</title>
        <authorList>
            <person name="Yun J."/>
            <person name="Puri R."/>
            <person name="Yang H."/>
            <person name="Lizzio M.A."/>
            <person name="Wu C."/>
            <person name="Sheng Z.H."/>
            <person name="Guo M."/>
        </authorList>
    </citation>
    <scope>FUNCTION</scope>
    <scope>CATALYTIC ACTIVITY</scope>
    <scope>INTERACTION WITH MARF</scope>
    <scope>UBIQUITINATION</scope>
    <scope>DISRUPTION PHENOTYPE</scope>
    <scope>MUTAGENESIS OF HIS-307</scope>
</reference>
<accession>Q9VZJ9</accession>
<dbReference type="EC" id="2.3.2.27" evidence="4"/>
<dbReference type="EMBL" id="AE014296">
    <property type="protein sequence ID" value="AAF47822.1"/>
    <property type="molecule type" value="Genomic_DNA"/>
</dbReference>
<dbReference type="EMBL" id="AE014296">
    <property type="protein sequence ID" value="ALI30453.1"/>
    <property type="molecule type" value="Genomic_DNA"/>
</dbReference>
<dbReference type="EMBL" id="AY113263">
    <property type="protein sequence ID" value="AAM29268.1"/>
    <property type="molecule type" value="mRNA"/>
</dbReference>
<dbReference type="RefSeq" id="NP_001303365.1">
    <property type="nucleotide sequence ID" value="NM_001316436.1"/>
</dbReference>
<dbReference type="RefSeq" id="NP_647847.1">
    <property type="nucleotide sequence ID" value="NM_139590.4"/>
</dbReference>
<dbReference type="FunCoup" id="Q9VZJ9">
    <property type="interactions" value="1295"/>
</dbReference>
<dbReference type="IntAct" id="Q9VZJ9">
    <property type="interactions" value="4"/>
</dbReference>
<dbReference type="STRING" id="7227.FBpp0312381"/>
<dbReference type="PaxDb" id="7227-FBpp0073049"/>
<dbReference type="DNASU" id="38472"/>
<dbReference type="EnsemblMetazoa" id="FBtr0073193">
    <property type="protein sequence ID" value="FBpp0073049"/>
    <property type="gene ID" value="FBgn0035483"/>
</dbReference>
<dbReference type="EnsemblMetazoa" id="FBtr0346806">
    <property type="protein sequence ID" value="FBpp0312381"/>
    <property type="gene ID" value="FBgn0035483"/>
</dbReference>
<dbReference type="GeneID" id="38472"/>
<dbReference type="KEGG" id="dme:Dmel_CG1134"/>
<dbReference type="UCSC" id="CG1134-RA">
    <property type="organism name" value="d. melanogaster"/>
</dbReference>
<dbReference type="AGR" id="FB:FBgn0035483"/>
<dbReference type="CTD" id="79594"/>
<dbReference type="FlyBase" id="FBgn0035483">
    <property type="gene designation" value="Mul1"/>
</dbReference>
<dbReference type="VEuPathDB" id="VectorBase:FBgn0035483"/>
<dbReference type="eggNOG" id="KOG1571">
    <property type="taxonomic scope" value="Eukaryota"/>
</dbReference>
<dbReference type="GeneTree" id="ENSGT00390000012141"/>
<dbReference type="HOGENOM" id="CLU_050604_1_0_1"/>
<dbReference type="InParanoid" id="Q9VZJ9"/>
<dbReference type="OMA" id="YILWKQY"/>
<dbReference type="OrthoDB" id="66726at2759"/>
<dbReference type="PhylomeDB" id="Q9VZJ9"/>
<dbReference type="Reactome" id="R-DME-5689880">
    <property type="pathway name" value="Ub-specific processing proteases"/>
</dbReference>
<dbReference type="Reactome" id="R-DME-8951664">
    <property type="pathway name" value="Neddylation"/>
</dbReference>
<dbReference type="Reactome" id="R-DME-9755511">
    <property type="pathway name" value="KEAP1-NFE2L2 pathway"/>
</dbReference>
<dbReference type="BioGRID-ORCS" id="38472">
    <property type="hits" value="0 hits in 1 CRISPR screen"/>
</dbReference>
<dbReference type="GenomeRNAi" id="38472"/>
<dbReference type="PRO" id="PR:Q9VZJ9"/>
<dbReference type="Proteomes" id="UP000000803">
    <property type="component" value="Chromosome 3L"/>
</dbReference>
<dbReference type="Bgee" id="FBgn0035483">
    <property type="expression patterns" value="Expressed in mid-late elongation-stage spermatid (Drosophila) in testis and 57 other cell types or tissues"/>
</dbReference>
<dbReference type="GO" id="GO:0005741">
    <property type="term" value="C:mitochondrial outer membrane"/>
    <property type="evidence" value="ECO:0000250"/>
    <property type="project" value="FlyBase"/>
</dbReference>
<dbReference type="GO" id="GO:0005777">
    <property type="term" value="C:peroxisome"/>
    <property type="evidence" value="ECO:0000250"/>
    <property type="project" value="FlyBase"/>
</dbReference>
<dbReference type="GO" id="GO:0061630">
    <property type="term" value="F:ubiquitin protein ligase activity"/>
    <property type="evidence" value="ECO:0000250"/>
    <property type="project" value="FlyBase"/>
</dbReference>
<dbReference type="GO" id="GO:0004842">
    <property type="term" value="F:ubiquitin-protein transferase activity"/>
    <property type="evidence" value="ECO:0000318"/>
    <property type="project" value="GO_Central"/>
</dbReference>
<dbReference type="GO" id="GO:0008270">
    <property type="term" value="F:zinc ion binding"/>
    <property type="evidence" value="ECO:0000255"/>
    <property type="project" value="FlyBase"/>
</dbReference>
<dbReference type="GO" id="GO:0090141">
    <property type="term" value="P:positive regulation of mitochondrial fission"/>
    <property type="evidence" value="ECO:0000315"/>
    <property type="project" value="FlyBase"/>
</dbReference>
<dbReference type="GO" id="GO:0016567">
    <property type="term" value="P:protein ubiquitination"/>
    <property type="evidence" value="ECO:0000315"/>
    <property type="project" value="FlyBase"/>
</dbReference>
<dbReference type="CDD" id="cd16649">
    <property type="entry name" value="mRING-HC-C3HC5_CGRF1-like"/>
    <property type="match status" value="1"/>
</dbReference>
<dbReference type="FunFam" id="3.30.40.10:FF:000729">
    <property type="entry name" value="Mitochondrial ubiquitin ligase activator of nfkb 1-A"/>
    <property type="match status" value="1"/>
</dbReference>
<dbReference type="Gene3D" id="3.30.40.10">
    <property type="entry name" value="Zinc/RING finger domain, C3HC4 (zinc finger)"/>
    <property type="match status" value="1"/>
</dbReference>
<dbReference type="InterPro" id="IPR051652">
    <property type="entry name" value="MDM2_MDM4_MUL1"/>
</dbReference>
<dbReference type="InterPro" id="IPR022170">
    <property type="entry name" value="MUL1-like"/>
</dbReference>
<dbReference type="InterPro" id="IPR001841">
    <property type="entry name" value="Znf_RING"/>
</dbReference>
<dbReference type="InterPro" id="IPR013083">
    <property type="entry name" value="Znf_RING/FYVE/PHD"/>
</dbReference>
<dbReference type="PANTHER" id="PTHR12183:SF32">
    <property type="entry name" value="MITOCHONDRIAL E3 UBIQUITIN PROTEIN LIGASE 1"/>
    <property type="match status" value="1"/>
</dbReference>
<dbReference type="PANTHER" id="PTHR12183">
    <property type="entry name" value="MITOCHONDRIAL UBIQUITIN LIGASE ACTIVATOR OF NFKB 1"/>
    <property type="match status" value="1"/>
</dbReference>
<dbReference type="Pfam" id="PF12483">
    <property type="entry name" value="GIDE"/>
    <property type="match status" value="1"/>
</dbReference>
<dbReference type="Pfam" id="PF13920">
    <property type="entry name" value="zf-C3HC4_3"/>
    <property type="match status" value="1"/>
</dbReference>
<dbReference type="SMART" id="SM00184">
    <property type="entry name" value="RING"/>
    <property type="match status" value="1"/>
</dbReference>
<dbReference type="SUPFAM" id="SSF57850">
    <property type="entry name" value="RING/U-box"/>
    <property type="match status" value="1"/>
</dbReference>
<dbReference type="PROSITE" id="PS50089">
    <property type="entry name" value="ZF_RING_2"/>
    <property type="match status" value="1"/>
</dbReference>